<organism>
    <name type="scientific">Pseudomonas syringae pv. tomato (strain ATCC BAA-871 / DC3000)</name>
    <dbReference type="NCBI Taxonomy" id="223283"/>
    <lineage>
        <taxon>Bacteria</taxon>
        <taxon>Pseudomonadati</taxon>
        <taxon>Pseudomonadota</taxon>
        <taxon>Gammaproteobacteria</taxon>
        <taxon>Pseudomonadales</taxon>
        <taxon>Pseudomonadaceae</taxon>
        <taxon>Pseudomonas</taxon>
    </lineage>
</organism>
<evidence type="ECO:0000255" key="1">
    <source>
        <dbReference type="HAMAP-Rule" id="MF_00198"/>
    </source>
</evidence>
<name>SPEE_PSESM</name>
<dbReference type="EC" id="2.5.1.16" evidence="1"/>
<dbReference type="EMBL" id="AE016853">
    <property type="protein sequence ID" value="AAO55573.1"/>
    <property type="molecule type" value="Genomic_DNA"/>
</dbReference>
<dbReference type="RefSeq" id="NP_791878.1">
    <property type="nucleotide sequence ID" value="NC_004578.1"/>
</dbReference>
<dbReference type="RefSeq" id="WP_005766858.1">
    <property type="nucleotide sequence ID" value="NC_004578.1"/>
</dbReference>
<dbReference type="SMR" id="Q884N3"/>
<dbReference type="STRING" id="223283.PSPTO_2055"/>
<dbReference type="GeneID" id="1183700"/>
<dbReference type="KEGG" id="pst:PSPTO_2055"/>
<dbReference type="PATRIC" id="fig|223283.9.peg.2086"/>
<dbReference type="eggNOG" id="COG0421">
    <property type="taxonomic scope" value="Bacteria"/>
</dbReference>
<dbReference type="HOGENOM" id="CLU_048199_0_0_6"/>
<dbReference type="OrthoDB" id="9793120at2"/>
<dbReference type="PhylomeDB" id="Q884N3"/>
<dbReference type="UniPathway" id="UPA00248">
    <property type="reaction ID" value="UER00314"/>
</dbReference>
<dbReference type="Proteomes" id="UP000002515">
    <property type="component" value="Chromosome"/>
</dbReference>
<dbReference type="GO" id="GO:0005829">
    <property type="term" value="C:cytosol"/>
    <property type="evidence" value="ECO:0007669"/>
    <property type="project" value="TreeGrafter"/>
</dbReference>
<dbReference type="GO" id="GO:0004766">
    <property type="term" value="F:spermidine synthase activity"/>
    <property type="evidence" value="ECO:0007669"/>
    <property type="project" value="UniProtKB-UniRule"/>
</dbReference>
<dbReference type="GO" id="GO:0008295">
    <property type="term" value="P:spermidine biosynthetic process"/>
    <property type="evidence" value="ECO:0007669"/>
    <property type="project" value="UniProtKB-UniRule"/>
</dbReference>
<dbReference type="CDD" id="cd02440">
    <property type="entry name" value="AdoMet_MTases"/>
    <property type="match status" value="1"/>
</dbReference>
<dbReference type="FunFam" id="2.30.140.10:FF:000002">
    <property type="entry name" value="Polyamine aminopropyltransferase"/>
    <property type="match status" value="1"/>
</dbReference>
<dbReference type="Gene3D" id="2.30.140.10">
    <property type="entry name" value="Spermidine synthase, tetramerisation domain"/>
    <property type="match status" value="1"/>
</dbReference>
<dbReference type="Gene3D" id="3.40.50.150">
    <property type="entry name" value="Vaccinia Virus protein VP39"/>
    <property type="match status" value="1"/>
</dbReference>
<dbReference type="HAMAP" id="MF_00198">
    <property type="entry name" value="Spermidine_synth"/>
    <property type="match status" value="1"/>
</dbReference>
<dbReference type="InterPro" id="IPR030374">
    <property type="entry name" value="PABS"/>
</dbReference>
<dbReference type="InterPro" id="IPR030373">
    <property type="entry name" value="PABS_CS"/>
</dbReference>
<dbReference type="InterPro" id="IPR029063">
    <property type="entry name" value="SAM-dependent_MTases_sf"/>
</dbReference>
<dbReference type="InterPro" id="IPR001045">
    <property type="entry name" value="Spermi_synthase"/>
</dbReference>
<dbReference type="InterPro" id="IPR035246">
    <property type="entry name" value="Spermidine_synt_N"/>
</dbReference>
<dbReference type="InterPro" id="IPR037163">
    <property type="entry name" value="Spermidine_synt_N_sf"/>
</dbReference>
<dbReference type="NCBIfam" id="NF037959">
    <property type="entry name" value="MFS_SpdSyn"/>
    <property type="match status" value="1"/>
</dbReference>
<dbReference type="NCBIfam" id="NF002010">
    <property type="entry name" value="PRK00811.1"/>
    <property type="match status" value="1"/>
</dbReference>
<dbReference type="NCBIfam" id="TIGR00417">
    <property type="entry name" value="speE"/>
    <property type="match status" value="1"/>
</dbReference>
<dbReference type="PANTHER" id="PTHR11558:SF11">
    <property type="entry name" value="SPERMIDINE SYNTHASE"/>
    <property type="match status" value="1"/>
</dbReference>
<dbReference type="PANTHER" id="PTHR11558">
    <property type="entry name" value="SPERMIDINE/SPERMINE SYNTHASE"/>
    <property type="match status" value="1"/>
</dbReference>
<dbReference type="Pfam" id="PF17284">
    <property type="entry name" value="Spermine_synt_N"/>
    <property type="match status" value="1"/>
</dbReference>
<dbReference type="Pfam" id="PF01564">
    <property type="entry name" value="Spermine_synth"/>
    <property type="match status" value="1"/>
</dbReference>
<dbReference type="SUPFAM" id="SSF53335">
    <property type="entry name" value="S-adenosyl-L-methionine-dependent methyltransferases"/>
    <property type="match status" value="1"/>
</dbReference>
<dbReference type="PROSITE" id="PS01330">
    <property type="entry name" value="PABS_1"/>
    <property type="match status" value="1"/>
</dbReference>
<dbReference type="PROSITE" id="PS51006">
    <property type="entry name" value="PABS_2"/>
    <property type="match status" value="1"/>
</dbReference>
<sequence>MSDYQETLYEGYGQRFRMEKMLHEVRTEHQHLVIFQNPRMGRVMALDGVIQTTEADEFIYHEMLTHVPILAHGAAKRVLIIGGGDGGMLREVAKHLTVEHITMVEIDATVVEMCKEFLPNHSSGAFDDSRLNLVIDDGMRFVATTEEKFDVIISDSTDPIGPGEVLFSENFYQACHRCLNEGGILVTQNGTPFMQLSGVQTTAGRMNGLFADWHFYQAAIPTYIGGAMTFAWGATDKSYRKLPLETLRQRFSGSGIVTRYYNPEVHIGAFALPQYVLHAVNKASND</sequence>
<accession>Q884N3</accession>
<protein>
    <recommendedName>
        <fullName evidence="1">Polyamine aminopropyltransferase</fullName>
    </recommendedName>
    <alternativeName>
        <fullName evidence="1">Putrescine aminopropyltransferase</fullName>
        <shortName evidence="1">PAPT</shortName>
    </alternativeName>
    <alternativeName>
        <fullName evidence="1">Spermidine synthase</fullName>
        <shortName evidence="1">SPDS</shortName>
        <shortName evidence="1">SPDSY</shortName>
        <ecNumber evidence="1">2.5.1.16</ecNumber>
    </alternativeName>
</protein>
<proteinExistence type="inferred from homology"/>
<comment type="function">
    <text evidence="1">Catalyzes the irreversible transfer of a propylamine group from the amino donor S-adenosylmethioninamine (decarboxy-AdoMet) to putrescine (1,4-diaminobutane) to yield spermidine.</text>
</comment>
<comment type="catalytic activity">
    <reaction evidence="1">
        <text>S-adenosyl 3-(methylsulfanyl)propylamine + putrescine = S-methyl-5'-thioadenosine + spermidine + H(+)</text>
        <dbReference type="Rhea" id="RHEA:12721"/>
        <dbReference type="ChEBI" id="CHEBI:15378"/>
        <dbReference type="ChEBI" id="CHEBI:17509"/>
        <dbReference type="ChEBI" id="CHEBI:57443"/>
        <dbReference type="ChEBI" id="CHEBI:57834"/>
        <dbReference type="ChEBI" id="CHEBI:326268"/>
        <dbReference type="EC" id="2.5.1.16"/>
    </reaction>
</comment>
<comment type="pathway">
    <text evidence="1">Amine and polyamine biosynthesis; spermidine biosynthesis; spermidine from putrescine: step 1/1.</text>
</comment>
<comment type="subunit">
    <text evidence="1">Homodimer or homotetramer.</text>
</comment>
<comment type="subcellular location">
    <subcellularLocation>
        <location evidence="1">Cytoplasm</location>
    </subcellularLocation>
</comment>
<comment type="similarity">
    <text evidence="1">Belongs to the spermidine/spermine synthase family.</text>
</comment>
<gene>
    <name evidence="1" type="primary">speE</name>
    <name type="ordered locus">PSPTO_2055</name>
</gene>
<keyword id="KW-0963">Cytoplasm</keyword>
<keyword id="KW-0620">Polyamine biosynthesis</keyword>
<keyword id="KW-1185">Reference proteome</keyword>
<keyword id="KW-0745">Spermidine biosynthesis</keyword>
<keyword id="KW-0808">Transferase</keyword>
<feature type="chain" id="PRO_0000156499" description="Polyamine aminopropyltransferase">
    <location>
        <begin position="1"/>
        <end position="286"/>
    </location>
</feature>
<feature type="domain" description="PABS" evidence="1">
    <location>
        <begin position="1"/>
        <end position="235"/>
    </location>
</feature>
<feature type="active site" description="Proton acceptor" evidence="1">
    <location>
        <position position="155"/>
    </location>
</feature>
<feature type="binding site" evidence="1">
    <location>
        <position position="30"/>
    </location>
    <ligand>
        <name>S-methyl-5'-thioadenosine</name>
        <dbReference type="ChEBI" id="CHEBI:17509"/>
    </ligand>
</feature>
<feature type="binding site" evidence="1">
    <location>
        <position position="61"/>
    </location>
    <ligand>
        <name>spermidine</name>
        <dbReference type="ChEBI" id="CHEBI:57834"/>
    </ligand>
</feature>
<feature type="binding site" evidence="1">
    <location>
        <position position="85"/>
    </location>
    <ligand>
        <name>spermidine</name>
        <dbReference type="ChEBI" id="CHEBI:57834"/>
    </ligand>
</feature>
<feature type="binding site" evidence="1">
    <location>
        <position position="105"/>
    </location>
    <ligand>
        <name>S-methyl-5'-thioadenosine</name>
        <dbReference type="ChEBI" id="CHEBI:17509"/>
    </ligand>
</feature>
<feature type="binding site" evidence="1">
    <location>
        <begin position="137"/>
        <end position="138"/>
    </location>
    <ligand>
        <name>S-methyl-5'-thioadenosine</name>
        <dbReference type="ChEBI" id="CHEBI:17509"/>
    </ligand>
</feature>
<feature type="binding site" evidence="1">
    <location>
        <begin position="155"/>
        <end position="158"/>
    </location>
    <ligand>
        <name>spermidine</name>
        <dbReference type="ChEBI" id="CHEBI:57834"/>
    </ligand>
</feature>
<feature type="binding site" evidence="1">
    <location>
        <position position="162"/>
    </location>
    <ligand>
        <name>S-methyl-5'-thioadenosine</name>
        <dbReference type="ChEBI" id="CHEBI:17509"/>
    </ligand>
</feature>
<reference key="1">
    <citation type="journal article" date="2003" name="Proc. Natl. Acad. Sci. U.S.A.">
        <title>The complete genome sequence of the Arabidopsis and tomato pathogen Pseudomonas syringae pv. tomato DC3000.</title>
        <authorList>
            <person name="Buell C.R."/>
            <person name="Joardar V."/>
            <person name="Lindeberg M."/>
            <person name="Selengut J."/>
            <person name="Paulsen I.T."/>
            <person name="Gwinn M.L."/>
            <person name="Dodson R.J."/>
            <person name="DeBoy R.T."/>
            <person name="Durkin A.S."/>
            <person name="Kolonay J.F."/>
            <person name="Madupu R."/>
            <person name="Daugherty S.C."/>
            <person name="Brinkac L.M."/>
            <person name="Beanan M.J."/>
            <person name="Haft D.H."/>
            <person name="Nelson W.C."/>
            <person name="Davidsen T.M."/>
            <person name="Zafar N."/>
            <person name="Zhou L."/>
            <person name="Liu J."/>
            <person name="Yuan Q."/>
            <person name="Khouri H.M."/>
            <person name="Fedorova N.B."/>
            <person name="Tran B."/>
            <person name="Russell D."/>
            <person name="Berry K.J."/>
            <person name="Utterback T.R."/>
            <person name="Van Aken S.E."/>
            <person name="Feldblyum T.V."/>
            <person name="D'Ascenzo M."/>
            <person name="Deng W.-L."/>
            <person name="Ramos A.R."/>
            <person name="Alfano J.R."/>
            <person name="Cartinhour S."/>
            <person name="Chatterjee A.K."/>
            <person name="Delaney T.P."/>
            <person name="Lazarowitz S.G."/>
            <person name="Martin G.B."/>
            <person name="Schneider D.J."/>
            <person name="Tang X."/>
            <person name="Bender C.L."/>
            <person name="White O."/>
            <person name="Fraser C.M."/>
            <person name="Collmer A."/>
        </authorList>
    </citation>
    <scope>NUCLEOTIDE SEQUENCE [LARGE SCALE GENOMIC DNA]</scope>
    <source>
        <strain>ATCC BAA-871 / DC3000</strain>
    </source>
</reference>